<feature type="chain" id="PRO_1000002277" description="Acetate kinase">
    <location>
        <begin position="1"/>
        <end position="397"/>
    </location>
</feature>
<feature type="active site" description="Proton donor/acceptor" evidence="1">
    <location>
        <position position="146"/>
    </location>
</feature>
<feature type="binding site" evidence="1">
    <location>
        <position position="8"/>
    </location>
    <ligand>
        <name>Mg(2+)</name>
        <dbReference type="ChEBI" id="CHEBI:18420"/>
    </ligand>
</feature>
<feature type="binding site" evidence="1">
    <location>
        <position position="15"/>
    </location>
    <ligand>
        <name>ATP</name>
        <dbReference type="ChEBI" id="CHEBI:30616"/>
    </ligand>
</feature>
<feature type="binding site" evidence="1">
    <location>
        <position position="89"/>
    </location>
    <ligand>
        <name>substrate</name>
    </ligand>
</feature>
<feature type="binding site" evidence="1">
    <location>
        <begin position="206"/>
        <end position="210"/>
    </location>
    <ligand>
        <name>ATP</name>
        <dbReference type="ChEBI" id="CHEBI:30616"/>
    </ligand>
</feature>
<feature type="binding site" evidence="1">
    <location>
        <begin position="283"/>
        <end position="285"/>
    </location>
    <ligand>
        <name>ATP</name>
        <dbReference type="ChEBI" id="CHEBI:30616"/>
    </ligand>
</feature>
<feature type="binding site" evidence="1">
    <location>
        <begin position="331"/>
        <end position="335"/>
    </location>
    <ligand>
        <name>ATP</name>
        <dbReference type="ChEBI" id="CHEBI:30616"/>
    </ligand>
</feature>
<feature type="binding site" evidence="1">
    <location>
        <position position="383"/>
    </location>
    <ligand>
        <name>Mg(2+)</name>
        <dbReference type="ChEBI" id="CHEBI:18420"/>
    </ligand>
</feature>
<feature type="site" description="Transition state stabilizer" evidence="1">
    <location>
        <position position="178"/>
    </location>
</feature>
<feature type="site" description="Transition state stabilizer" evidence="1">
    <location>
        <position position="239"/>
    </location>
</feature>
<dbReference type="EC" id="2.7.2.1" evidence="1"/>
<dbReference type="EMBL" id="CP000419">
    <property type="protein sequence ID" value="ABJ66960.1"/>
    <property type="molecule type" value="Genomic_DNA"/>
</dbReference>
<dbReference type="RefSeq" id="WP_011681683.1">
    <property type="nucleotide sequence ID" value="NC_008532.1"/>
</dbReference>
<dbReference type="SMR" id="Q03IL2"/>
<dbReference type="KEGG" id="ste:STER_1834"/>
<dbReference type="HOGENOM" id="CLU_020352_0_1_9"/>
<dbReference type="UniPathway" id="UPA00340">
    <property type="reaction ID" value="UER00458"/>
</dbReference>
<dbReference type="GO" id="GO:0005737">
    <property type="term" value="C:cytoplasm"/>
    <property type="evidence" value="ECO:0007669"/>
    <property type="project" value="UniProtKB-SubCell"/>
</dbReference>
<dbReference type="GO" id="GO:0008776">
    <property type="term" value="F:acetate kinase activity"/>
    <property type="evidence" value="ECO:0007669"/>
    <property type="project" value="UniProtKB-UniRule"/>
</dbReference>
<dbReference type="GO" id="GO:0005524">
    <property type="term" value="F:ATP binding"/>
    <property type="evidence" value="ECO:0007669"/>
    <property type="project" value="UniProtKB-KW"/>
</dbReference>
<dbReference type="GO" id="GO:0000287">
    <property type="term" value="F:magnesium ion binding"/>
    <property type="evidence" value="ECO:0007669"/>
    <property type="project" value="UniProtKB-UniRule"/>
</dbReference>
<dbReference type="GO" id="GO:0006083">
    <property type="term" value="P:acetate metabolic process"/>
    <property type="evidence" value="ECO:0007669"/>
    <property type="project" value="TreeGrafter"/>
</dbReference>
<dbReference type="GO" id="GO:0006085">
    <property type="term" value="P:acetyl-CoA biosynthetic process"/>
    <property type="evidence" value="ECO:0007669"/>
    <property type="project" value="UniProtKB-UniRule"/>
</dbReference>
<dbReference type="CDD" id="cd24010">
    <property type="entry name" value="ASKHA_NBD_AcK_PK"/>
    <property type="match status" value="1"/>
</dbReference>
<dbReference type="Gene3D" id="3.30.420.40">
    <property type="match status" value="2"/>
</dbReference>
<dbReference type="HAMAP" id="MF_00020">
    <property type="entry name" value="Acetate_kinase"/>
    <property type="match status" value="1"/>
</dbReference>
<dbReference type="InterPro" id="IPR004372">
    <property type="entry name" value="Ac/propionate_kinase"/>
</dbReference>
<dbReference type="InterPro" id="IPR000890">
    <property type="entry name" value="Aliphatic_acid_kin_short-chain"/>
</dbReference>
<dbReference type="InterPro" id="IPR023865">
    <property type="entry name" value="Aliphatic_acid_kinase_CS"/>
</dbReference>
<dbReference type="InterPro" id="IPR043129">
    <property type="entry name" value="ATPase_NBD"/>
</dbReference>
<dbReference type="NCBIfam" id="TIGR00016">
    <property type="entry name" value="ackA"/>
    <property type="match status" value="1"/>
</dbReference>
<dbReference type="PANTHER" id="PTHR21060">
    <property type="entry name" value="ACETATE KINASE"/>
    <property type="match status" value="1"/>
</dbReference>
<dbReference type="PANTHER" id="PTHR21060:SF15">
    <property type="entry name" value="ACETATE KINASE-RELATED"/>
    <property type="match status" value="1"/>
</dbReference>
<dbReference type="Pfam" id="PF00871">
    <property type="entry name" value="Acetate_kinase"/>
    <property type="match status" value="1"/>
</dbReference>
<dbReference type="PIRSF" id="PIRSF000722">
    <property type="entry name" value="Acetate_prop_kin"/>
    <property type="match status" value="1"/>
</dbReference>
<dbReference type="PRINTS" id="PR00471">
    <property type="entry name" value="ACETATEKNASE"/>
</dbReference>
<dbReference type="SUPFAM" id="SSF53067">
    <property type="entry name" value="Actin-like ATPase domain"/>
    <property type="match status" value="2"/>
</dbReference>
<dbReference type="PROSITE" id="PS01075">
    <property type="entry name" value="ACETATE_KINASE_1"/>
    <property type="match status" value="1"/>
</dbReference>
<dbReference type="PROSITE" id="PS01076">
    <property type="entry name" value="ACETATE_KINASE_2"/>
    <property type="match status" value="1"/>
</dbReference>
<sequence length="397" mass="43334">MTKTIAINAGSSSLKWQLYEMPEEVVLAKGLIERIGLRDSVSTVKFADRSESQTLDIADHVQAVKILLDDLIRFDIIKSYDEITGVGHRVVAGGEYFKESSLVDEYALAKIEELSASAPLHNPGAASGIRAFKELLPDITSVAVFDTAFHTSMPEVAYRYPVPNRYYTDYQVRKYGAHGTSHQYVSQEAAKLLGKPIEETKIITAHVGNGVSITAVDGGKSVDTSMGLTPLGGVMMGTRTGDLDPAIIPFIIDREPDMADAERIRHVFNKESGLLGISEKSSDMRDIIAGKEAGDEKCTLAYDLYVDRLRKYIAQYFGVMNGADAIVFTAGIGENSADVRASVLDGLTWFGIEVDPEKNVFGRVGDITTADSAVKVFVIPTDEELVIARDVERLKTK</sequence>
<protein>
    <recommendedName>
        <fullName evidence="1">Acetate kinase</fullName>
        <ecNumber evidence="1">2.7.2.1</ecNumber>
    </recommendedName>
    <alternativeName>
        <fullName evidence="1">Acetokinase</fullName>
    </alternativeName>
</protein>
<comment type="function">
    <text evidence="1">Catalyzes the formation of acetyl phosphate from acetate and ATP. Can also catalyze the reverse reaction.</text>
</comment>
<comment type="catalytic activity">
    <reaction evidence="1">
        <text>acetate + ATP = acetyl phosphate + ADP</text>
        <dbReference type="Rhea" id="RHEA:11352"/>
        <dbReference type="ChEBI" id="CHEBI:22191"/>
        <dbReference type="ChEBI" id="CHEBI:30089"/>
        <dbReference type="ChEBI" id="CHEBI:30616"/>
        <dbReference type="ChEBI" id="CHEBI:456216"/>
        <dbReference type="EC" id="2.7.2.1"/>
    </reaction>
</comment>
<comment type="cofactor">
    <cofactor evidence="1">
        <name>Mg(2+)</name>
        <dbReference type="ChEBI" id="CHEBI:18420"/>
    </cofactor>
    <cofactor evidence="1">
        <name>Mn(2+)</name>
        <dbReference type="ChEBI" id="CHEBI:29035"/>
    </cofactor>
    <text evidence="1">Mg(2+). Can also accept Mn(2+).</text>
</comment>
<comment type="pathway">
    <text evidence="1">Metabolic intermediate biosynthesis; acetyl-CoA biosynthesis; acetyl-CoA from acetate: step 1/2.</text>
</comment>
<comment type="subunit">
    <text evidence="1">Homodimer.</text>
</comment>
<comment type="subcellular location">
    <subcellularLocation>
        <location evidence="1">Cytoplasm</location>
    </subcellularLocation>
</comment>
<comment type="similarity">
    <text evidence="1">Belongs to the acetokinase family.</text>
</comment>
<keyword id="KW-0067">ATP-binding</keyword>
<keyword id="KW-0963">Cytoplasm</keyword>
<keyword id="KW-0418">Kinase</keyword>
<keyword id="KW-0460">Magnesium</keyword>
<keyword id="KW-0479">Metal-binding</keyword>
<keyword id="KW-0547">Nucleotide-binding</keyword>
<keyword id="KW-0808">Transferase</keyword>
<proteinExistence type="inferred from homology"/>
<evidence type="ECO:0000255" key="1">
    <source>
        <dbReference type="HAMAP-Rule" id="MF_00020"/>
    </source>
</evidence>
<organism>
    <name type="scientific">Streptococcus thermophilus (strain ATCC BAA-491 / LMD-9)</name>
    <dbReference type="NCBI Taxonomy" id="322159"/>
    <lineage>
        <taxon>Bacteria</taxon>
        <taxon>Bacillati</taxon>
        <taxon>Bacillota</taxon>
        <taxon>Bacilli</taxon>
        <taxon>Lactobacillales</taxon>
        <taxon>Streptococcaceae</taxon>
        <taxon>Streptococcus</taxon>
    </lineage>
</organism>
<gene>
    <name evidence="1" type="primary">ackA</name>
    <name type="ordered locus">STER_1834</name>
</gene>
<reference key="1">
    <citation type="journal article" date="2006" name="Proc. Natl. Acad. Sci. U.S.A.">
        <title>Comparative genomics of the lactic acid bacteria.</title>
        <authorList>
            <person name="Makarova K.S."/>
            <person name="Slesarev A."/>
            <person name="Wolf Y.I."/>
            <person name="Sorokin A."/>
            <person name="Mirkin B."/>
            <person name="Koonin E.V."/>
            <person name="Pavlov A."/>
            <person name="Pavlova N."/>
            <person name="Karamychev V."/>
            <person name="Polouchine N."/>
            <person name="Shakhova V."/>
            <person name="Grigoriev I."/>
            <person name="Lou Y."/>
            <person name="Rohksar D."/>
            <person name="Lucas S."/>
            <person name="Huang K."/>
            <person name="Goodstein D.M."/>
            <person name="Hawkins T."/>
            <person name="Plengvidhya V."/>
            <person name="Welker D."/>
            <person name="Hughes J."/>
            <person name="Goh Y."/>
            <person name="Benson A."/>
            <person name="Baldwin K."/>
            <person name="Lee J.-H."/>
            <person name="Diaz-Muniz I."/>
            <person name="Dosti B."/>
            <person name="Smeianov V."/>
            <person name="Wechter W."/>
            <person name="Barabote R."/>
            <person name="Lorca G."/>
            <person name="Altermann E."/>
            <person name="Barrangou R."/>
            <person name="Ganesan B."/>
            <person name="Xie Y."/>
            <person name="Rawsthorne H."/>
            <person name="Tamir D."/>
            <person name="Parker C."/>
            <person name="Breidt F."/>
            <person name="Broadbent J.R."/>
            <person name="Hutkins R."/>
            <person name="O'Sullivan D."/>
            <person name="Steele J."/>
            <person name="Unlu G."/>
            <person name="Saier M.H. Jr."/>
            <person name="Klaenhammer T."/>
            <person name="Richardson P."/>
            <person name="Kozyavkin S."/>
            <person name="Weimer B.C."/>
            <person name="Mills D.A."/>
        </authorList>
    </citation>
    <scope>NUCLEOTIDE SEQUENCE [LARGE SCALE GENOMIC DNA]</scope>
    <source>
        <strain>ATCC BAA-491 / LMD-9</strain>
    </source>
</reference>
<accession>Q03IL2</accession>
<name>ACKA_STRTD</name>